<gene>
    <name evidence="1" type="primary">tbp</name>
    <name type="ordered locus">Msm_0720</name>
</gene>
<feature type="chain" id="PRO_1000049881" description="TATA-box-binding protein">
    <location>
        <begin position="1"/>
        <end position="181"/>
    </location>
</feature>
<feature type="repeat" description="1">
    <location>
        <begin position="8"/>
        <end position="84"/>
    </location>
</feature>
<feature type="repeat" description="2">
    <location>
        <begin position="99"/>
        <end position="175"/>
    </location>
</feature>
<dbReference type="EMBL" id="CP000678">
    <property type="protein sequence ID" value="ABQ86925.1"/>
    <property type="molecule type" value="Genomic_DNA"/>
</dbReference>
<dbReference type="RefSeq" id="WP_004032478.1">
    <property type="nucleotide sequence ID" value="NZ_CP117965.1"/>
</dbReference>
<dbReference type="SMR" id="A5UL47"/>
<dbReference type="STRING" id="420247.Msm_0720"/>
<dbReference type="EnsemblBacteria" id="ABQ86925">
    <property type="protein sequence ID" value="ABQ86925"/>
    <property type="gene ID" value="Msm_0720"/>
</dbReference>
<dbReference type="KEGG" id="msi:Msm_0720"/>
<dbReference type="PATRIC" id="fig|420247.28.peg.717"/>
<dbReference type="eggNOG" id="arCOG01764">
    <property type="taxonomic scope" value="Archaea"/>
</dbReference>
<dbReference type="HOGENOM" id="CLU_060161_4_3_2"/>
<dbReference type="Proteomes" id="UP000001992">
    <property type="component" value="Chromosome"/>
</dbReference>
<dbReference type="GO" id="GO:0003677">
    <property type="term" value="F:DNA binding"/>
    <property type="evidence" value="ECO:0007669"/>
    <property type="project" value="UniProtKB-KW"/>
</dbReference>
<dbReference type="GO" id="GO:0003700">
    <property type="term" value="F:DNA-binding transcription factor activity"/>
    <property type="evidence" value="ECO:0007669"/>
    <property type="project" value="UniProtKB-UniRule"/>
</dbReference>
<dbReference type="GO" id="GO:0006352">
    <property type="term" value="P:DNA-templated transcription initiation"/>
    <property type="evidence" value="ECO:0007669"/>
    <property type="project" value="InterPro"/>
</dbReference>
<dbReference type="CDD" id="cd04518">
    <property type="entry name" value="TBP_archaea"/>
    <property type="match status" value="1"/>
</dbReference>
<dbReference type="FunFam" id="3.30.310.10:FF:000007">
    <property type="entry name" value="TATA-box-binding protein"/>
    <property type="match status" value="1"/>
</dbReference>
<dbReference type="Gene3D" id="3.30.310.10">
    <property type="entry name" value="TATA-Binding Protein"/>
    <property type="match status" value="2"/>
</dbReference>
<dbReference type="HAMAP" id="MF_00408">
    <property type="entry name" value="TATA_bind_prot_arch"/>
    <property type="match status" value="1"/>
</dbReference>
<dbReference type="InterPro" id="IPR000814">
    <property type="entry name" value="TBP"/>
</dbReference>
<dbReference type="InterPro" id="IPR033711">
    <property type="entry name" value="TBP_archaea"/>
</dbReference>
<dbReference type="InterPro" id="IPR030491">
    <property type="entry name" value="TBP_CS"/>
</dbReference>
<dbReference type="InterPro" id="IPR012295">
    <property type="entry name" value="TBP_dom_sf"/>
</dbReference>
<dbReference type="NCBIfam" id="NF001593">
    <property type="entry name" value="PRK00394.1-2"/>
    <property type="match status" value="1"/>
</dbReference>
<dbReference type="NCBIfam" id="NF001601">
    <property type="entry name" value="PRK00394.2-6"/>
    <property type="match status" value="1"/>
</dbReference>
<dbReference type="PANTHER" id="PTHR10126">
    <property type="entry name" value="TATA-BOX BINDING PROTEIN"/>
    <property type="match status" value="1"/>
</dbReference>
<dbReference type="Pfam" id="PF00352">
    <property type="entry name" value="TBP"/>
    <property type="match status" value="2"/>
</dbReference>
<dbReference type="PRINTS" id="PR00686">
    <property type="entry name" value="TIFACTORIID"/>
</dbReference>
<dbReference type="SUPFAM" id="SSF55945">
    <property type="entry name" value="TATA-box binding protein-like"/>
    <property type="match status" value="2"/>
</dbReference>
<dbReference type="PROSITE" id="PS00351">
    <property type="entry name" value="TFIID"/>
    <property type="match status" value="1"/>
</dbReference>
<accession>A5UL47</accession>
<proteinExistence type="inferred from homology"/>
<evidence type="ECO:0000255" key="1">
    <source>
        <dbReference type="HAMAP-Rule" id="MF_00408"/>
    </source>
</evidence>
<reference key="1">
    <citation type="journal article" date="2007" name="Proc. Natl. Acad. Sci. U.S.A.">
        <title>Genomic and metabolic adaptations of Methanobrevibacter smithii to the human gut.</title>
        <authorList>
            <person name="Samuel B.S."/>
            <person name="Hansen E.E."/>
            <person name="Manchester J.K."/>
            <person name="Coutinho P.M."/>
            <person name="Henrissat B."/>
            <person name="Fulton R."/>
            <person name="Latreille P."/>
            <person name="Kim K."/>
            <person name="Wilson R.K."/>
            <person name="Gordon J.I."/>
        </authorList>
    </citation>
    <scope>NUCLEOTIDE SEQUENCE [LARGE SCALE GENOMIC DNA]</scope>
    <source>
        <strain>ATCC 35061 / DSM 861 / OCM 144 / PS</strain>
    </source>
</reference>
<keyword id="KW-0238">DNA-binding</keyword>
<keyword id="KW-0677">Repeat</keyword>
<keyword id="KW-0804">Transcription</keyword>
<keyword id="KW-0805">Transcription regulation</keyword>
<comment type="function">
    <text evidence="1">General factor that plays a role in the activation of archaeal genes transcribed by RNA polymerase. Binds specifically to the TATA box promoter element which lies close to the position of transcription initiation.</text>
</comment>
<comment type="similarity">
    <text evidence="1">Belongs to the TBP family.</text>
</comment>
<sequence length="181" mass="19816">MTDVDIKIENIVASASIGKDIVLTEVSEALEGVNFNREQFPGLVFKLKDPKTAALIFSSGKLVCTGAKSIDDSKLAIKKTVDLMRTIDTEIPHEFEIKIQNIVASANLESTLNLEAVALELEDTEYEPEQFPGLVYRLSDPKVVLLLFGSGKVVCTGAKTRSDAKLGVERAYDRLSELDLI</sequence>
<protein>
    <recommendedName>
        <fullName evidence="1">TATA-box-binding protein</fullName>
    </recommendedName>
    <alternativeName>
        <fullName evidence="1">Box A-binding protein</fullName>
        <shortName evidence="1">BAP</shortName>
    </alternativeName>
    <alternativeName>
        <fullName evidence="1">TATA sequence-binding protein</fullName>
        <shortName evidence="1">TBP</shortName>
    </alternativeName>
    <alternativeName>
        <fullName evidence="1">TATA-box factor</fullName>
    </alternativeName>
</protein>
<name>TBP_METS3</name>
<organism>
    <name type="scientific">Methanobrevibacter smithii (strain ATCC 35061 / DSM 861 / OCM 144 / PS)</name>
    <dbReference type="NCBI Taxonomy" id="420247"/>
    <lineage>
        <taxon>Archaea</taxon>
        <taxon>Methanobacteriati</taxon>
        <taxon>Methanobacteriota</taxon>
        <taxon>Methanomada group</taxon>
        <taxon>Methanobacteria</taxon>
        <taxon>Methanobacteriales</taxon>
        <taxon>Methanobacteriaceae</taxon>
        <taxon>Methanobrevibacter</taxon>
    </lineage>
</organism>